<comment type="subcellular location">
    <subcellularLocation>
        <location evidence="3">Membrane</location>
        <topology evidence="3">Single-pass type I membrane protein</topology>
    </subcellularLocation>
</comment>
<comment type="similarity">
    <text evidence="3">Belongs to the TMEM132 family.</text>
</comment>
<comment type="sequence caution" evidence="3">
    <conflict type="erroneous initiation">
        <sequence resource="EMBL-CDS" id="BAC25861"/>
    </conflict>
</comment>
<comment type="sequence caution" evidence="3">
    <conflict type="erroneous initiation">
        <sequence resource="EMBL-CDS" id="BAC28926"/>
    </conflict>
</comment>
<dbReference type="EMBL" id="AK028289">
    <property type="protein sequence ID" value="BAC25861.1"/>
    <property type="status" value="ALT_INIT"/>
    <property type="molecule type" value="mRNA"/>
</dbReference>
<dbReference type="EMBL" id="AK035053">
    <property type="protein sequence ID" value="BAC28926.1"/>
    <property type="status" value="ALT_INIT"/>
    <property type="molecule type" value="mRNA"/>
</dbReference>
<dbReference type="RefSeq" id="NP_780641.2">
    <property type="nucleotide sequence ID" value="NM_175432.3"/>
</dbReference>
<dbReference type="FunCoup" id="Q8CEF9">
    <property type="interactions" value="45"/>
</dbReference>
<dbReference type="STRING" id="10090.ENSMUSP00000113090"/>
<dbReference type="GlyCosmos" id="Q8CEF9">
    <property type="glycosylation" value="3 sites, No reported glycans"/>
</dbReference>
<dbReference type="GlyGen" id="Q8CEF9">
    <property type="glycosylation" value="7 sites, 4 N-linked glycans (4 sites), 1 O-linked glycan (1 site)"/>
</dbReference>
<dbReference type="PhosphoSitePlus" id="Q8CEF9"/>
<dbReference type="PaxDb" id="10090-ENSMUSP00000113090"/>
<dbReference type="ProteomicsDB" id="263212"/>
<dbReference type="GeneID" id="208213"/>
<dbReference type="KEGG" id="mmu:208213"/>
<dbReference type="AGR" id="MGI:2443061"/>
<dbReference type="CTD" id="92293"/>
<dbReference type="MGI" id="MGI:2443061">
    <property type="gene designation" value="Tmem132c"/>
</dbReference>
<dbReference type="eggNOG" id="KOG4789">
    <property type="taxonomic scope" value="Eukaryota"/>
</dbReference>
<dbReference type="InParanoid" id="Q8CEF9"/>
<dbReference type="OrthoDB" id="10026202at2759"/>
<dbReference type="PhylomeDB" id="Q8CEF9"/>
<dbReference type="BioGRID-ORCS" id="208213">
    <property type="hits" value="3 hits in 76 CRISPR screens"/>
</dbReference>
<dbReference type="ChiTaRS" id="Tmem132c">
    <property type="organism name" value="mouse"/>
</dbReference>
<dbReference type="PRO" id="PR:Q8CEF9"/>
<dbReference type="Proteomes" id="UP000000589">
    <property type="component" value="Unplaced"/>
</dbReference>
<dbReference type="RNAct" id="Q8CEF9">
    <property type="molecule type" value="protein"/>
</dbReference>
<dbReference type="GO" id="GO:0016020">
    <property type="term" value="C:membrane"/>
    <property type="evidence" value="ECO:0007669"/>
    <property type="project" value="UniProtKB-SubCell"/>
</dbReference>
<dbReference type="GO" id="GO:0010923">
    <property type="term" value="P:negative regulation of phosphatase activity"/>
    <property type="evidence" value="ECO:0000250"/>
    <property type="project" value="UniProtKB"/>
</dbReference>
<dbReference type="InterPro" id="IPR055422">
    <property type="entry name" value="Ig_TMEM132_2nd"/>
</dbReference>
<dbReference type="InterPro" id="IPR055423">
    <property type="entry name" value="Ig_TMEM132_5th"/>
</dbReference>
<dbReference type="InterPro" id="IPR055424">
    <property type="entry name" value="Ig_TMEM132_6th"/>
</dbReference>
<dbReference type="InterPro" id="IPR026307">
    <property type="entry name" value="TMEM132"/>
</dbReference>
<dbReference type="InterPro" id="IPR055421">
    <property type="entry name" value="TMEM132_3rd"/>
</dbReference>
<dbReference type="InterPro" id="IPR031436">
    <property type="entry name" value="TMEM132_C"/>
</dbReference>
<dbReference type="InterPro" id="IPR031437">
    <property type="entry name" value="TMEM132_M"/>
</dbReference>
<dbReference type="InterPro" id="IPR031435">
    <property type="entry name" value="TMEM132_N"/>
</dbReference>
<dbReference type="PANTHER" id="PTHR13388">
    <property type="entry name" value="DETONATOR, ISOFORM E"/>
    <property type="match status" value="1"/>
</dbReference>
<dbReference type="PANTHER" id="PTHR13388:SF4">
    <property type="entry name" value="TRANSMEMBRANE PROTEIN 132C"/>
    <property type="match status" value="1"/>
</dbReference>
<dbReference type="Pfam" id="PF23481">
    <property type="entry name" value="Ig_TMEM132_2nd"/>
    <property type="match status" value="1"/>
</dbReference>
<dbReference type="Pfam" id="PF16070">
    <property type="entry name" value="Ig_TMEM132_4th"/>
    <property type="match status" value="1"/>
</dbReference>
<dbReference type="Pfam" id="PF23486">
    <property type="entry name" value="Ig_TMEM132_5th"/>
    <property type="match status" value="1"/>
</dbReference>
<dbReference type="Pfam" id="PF23487">
    <property type="entry name" value="Ig_TMEM132_6th"/>
    <property type="match status" value="1"/>
</dbReference>
<dbReference type="Pfam" id="PF23039">
    <property type="entry name" value="TMEM132_3rd"/>
    <property type="match status" value="1"/>
</dbReference>
<dbReference type="Pfam" id="PF15706">
    <property type="entry name" value="TMEM132_C"/>
    <property type="match status" value="1"/>
</dbReference>
<dbReference type="Pfam" id="PF15705">
    <property type="entry name" value="TMEM132_N"/>
    <property type="match status" value="1"/>
</dbReference>
<feature type="signal peptide" evidence="1">
    <location>
        <begin position="1"/>
        <end position="31"/>
    </location>
</feature>
<feature type="chain" id="PRO_0000287099" description="Transmembrane protein 132C">
    <location>
        <begin position="32"/>
        <end position="1099"/>
    </location>
</feature>
<feature type="topological domain" description="Extracellular" evidence="1">
    <location>
        <begin position="32"/>
        <end position="915"/>
    </location>
</feature>
<feature type="transmembrane region" description="Helical" evidence="1">
    <location>
        <begin position="916"/>
        <end position="936"/>
    </location>
</feature>
<feature type="topological domain" description="Cytoplasmic" evidence="1">
    <location>
        <begin position="937"/>
        <end position="1099"/>
    </location>
</feature>
<feature type="region of interest" description="Disordered" evidence="2">
    <location>
        <begin position="237"/>
        <end position="260"/>
    </location>
</feature>
<feature type="region of interest" description="Disordered" evidence="2">
    <location>
        <begin position="801"/>
        <end position="872"/>
    </location>
</feature>
<feature type="region of interest" description="Disordered" evidence="2">
    <location>
        <begin position="1002"/>
        <end position="1045"/>
    </location>
</feature>
<feature type="compositionally biased region" description="Basic and acidic residues" evidence="2">
    <location>
        <begin position="813"/>
        <end position="849"/>
    </location>
</feature>
<feature type="compositionally biased region" description="Polar residues" evidence="2">
    <location>
        <begin position="1008"/>
        <end position="1018"/>
    </location>
</feature>
<feature type="glycosylation site" description="N-linked (GlcNAc...) asparagine" evidence="1">
    <location>
        <position position="95"/>
    </location>
</feature>
<feature type="glycosylation site" description="N-linked (GlcNAc...) asparagine" evidence="1">
    <location>
        <position position="314"/>
    </location>
</feature>
<feature type="glycosylation site" description="N-linked (GlcNAc...) asparagine" evidence="1">
    <location>
        <position position="371"/>
    </location>
</feature>
<protein>
    <recommendedName>
        <fullName>Transmembrane protein 132C</fullName>
    </recommendedName>
</protein>
<keyword id="KW-0325">Glycoprotein</keyword>
<keyword id="KW-0472">Membrane</keyword>
<keyword id="KW-1185">Reference proteome</keyword>
<keyword id="KW-0732">Signal</keyword>
<keyword id="KW-0812">Transmembrane</keyword>
<keyword id="KW-1133">Transmembrane helix</keyword>
<organism>
    <name type="scientific">Mus musculus</name>
    <name type="common">Mouse</name>
    <dbReference type="NCBI Taxonomy" id="10090"/>
    <lineage>
        <taxon>Eukaryota</taxon>
        <taxon>Metazoa</taxon>
        <taxon>Chordata</taxon>
        <taxon>Craniata</taxon>
        <taxon>Vertebrata</taxon>
        <taxon>Euteleostomi</taxon>
        <taxon>Mammalia</taxon>
        <taxon>Eutheria</taxon>
        <taxon>Euarchontoglires</taxon>
        <taxon>Glires</taxon>
        <taxon>Rodentia</taxon>
        <taxon>Myomorpha</taxon>
        <taxon>Muroidea</taxon>
        <taxon>Muridae</taxon>
        <taxon>Murinae</taxon>
        <taxon>Mus</taxon>
        <taxon>Mus</taxon>
    </lineage>
</organism>
<evidence type="ECO:0000255" key="1"/>
<evidence type="ECO:0000256" key="2">
    <source>
        <dbReference type="SAM" id="MobiDB-lite"/>
    </source>
</evidence>
<evidence type="ECO:0000305" key="3"/>
<name>T132C_MOUSE</name>
<sequence>MRSEGAAPRRAARYGALSLVLATLLGQVTESRGVMDNIQRFSSLPPYLPVSFHVLRAETAFFLKEANPDPLRNASLQSRVESFFIYKAQQPPVLNVSYGPYSAEKVIPLDLMLNPNFLGPTSKFPFDWRLKAYILQEKVYLSHPKVQVLFHIVGRDWDDHRDEKLPCLRVFAFRDSREVRGSCRLGGPLGLCVAQLEMLPGWFSPPAVVSGRRRPAERPEGSPVELYYAVQPGDERGDCTGGDTRKDNAIRPGKDGQEGRTSHLQKIGTISLYRAQDSNQLSELRLDGNVVIWLPSQPVKQGDIVTASVTIANNSTVDHFILRAKVKKGVNILTVQTSEPRQWDVRQEVGNGGKHTTTSVACQRLGPGARNRSSNLFSEVMQMNFEIASFSSLSGTQPITWQVEYPRKGATDIAVSEIFISQKDLVAIVPLAMDTELLNTAILTGKTVAMPVRVVSVEENSTLRDISELVECKATDENVIKVSDHCDYVFVNGKEIKGKMDSVVNFTYQHLSAPLHVTVWVPRLPLQIEVSDTELSQVKGWRVPIVASKRPTRDSEEEEEEEQKGRGCTLQFQHATVRVLTQFVSEGAGPWGQLSHLLSPDWQFDITHLVADFMKLESPHIATLQDSRVLVGREVGMTTIQVLSPLSDSILAEKTVTVLDDKVSVTDLAVQVVAGLSVTLHPISENNKATSAVAMAEELLRAPKKEAIISTWLQFSDGSVTPLDIYDSKDFSLTAISLDEAVVSIPQPLSPWWPTVVAEGEGQGPLLRVDMSIAEACQKSKRKSVLAVGIGHVGVKFGWDDADSSQTGEKDEEEIKNHASDRRQKIQDLERPGQDELYHGNFPGDREEGALSATTTTKSLLDNNVGKSGRRDGARLHSIPIDFTNFPAHVDLPKAKTRGTLEENGLMQTAHGLSDLEIGMYALLGVFCLAILVFLINCATFAFKYRHKQVPLEGQASMTHSHDWVWLGNEAELLENIGDLSPPQDEHTTIIDRGLGGCEENNHLLLNGGSQKPTQSQVHRPPGSGGRQTREPRQEPANSPTSKMKKVKFATFTIPPEESCPTVNSILSGEDDIKWVCQDLDVGAPKELRTYLEKFQDSV</sequence>
<accession>Q8CEF9</accession>
<accession>Q8BS69</accession>
<gene>
    <name type="primary">Tmem132c</name>
</gene>
<reference key="1">
    <citation type="journal article" date="2005" name="Science">
        <title>The transcriptional landscape of the mammalian genome.</title>
        <authorList>
            <person name="Carninci P."/>
            <person name="Kasukawa T."/>
            <person name="Katayama S."/>
            <person name="Gough J."/>
            <person name="Frith M.C."/>
            <person name="Maeda N."/>
            <person name="Oyama R."/>
            <person name="Ravasi T."/>
            <person name="Lenhard B."/>
            <person name="Wells C."/>
            <person name="Kodzius R."/>
            <person name="Shimokawa K."/>
            <person name="Bajic V.B."/>
            <person name="Brenner S.E."/>
            <person name="Batalov S."/>
            <person name="Forrest A.R."/>
            <person name="Zavolan M."/>
            <person name="Davis M.J."/>
            <person name="Wilming L.G."/>
            <person name="Aidinis V."/>
            <person name="Allen J.E."/>
            <person name="Ambesi-Impiombato A."/>
            <person name="Apweiler R."/>
            <person name="Aturaliya R.N."/>
            <person name="Bailey T.L."/>
            <person name="Bansal M."/>
            <person name="Baxter L."/>
            <person name="Beisel K.W."/>
            <person name="Bersano T."/>
            <person name="Bono H."/>
            <person name="Chalk A.M."/>
            <person name="Chiu K.P."/>
            <person name="Choudhary V."/>
            <person name="Christoffels A."/>
            <person name="Clutterbuck D.R."/>
            <person name="Crowe M.L."/>
            <person name="Dalla E."/>
            <person name="Dalrymple B.P."/>
            <person name="de Bono B."/>
            <person name="Della Gatta G."/>
            <person name="di Bernardo D."/>
            <person name="Down T."/>
            <person name="Engstrom P."/>
            <person name="Fagiolini M."/>
            <person name="Faulkner G."/>
            <person name="Fletcher C.F."/>
            <person name="Fukushima T."/>
            <person name="Furuno M."/>
            <person name="Futaki S."/>
            <person name="Gariboldi M."/>
            <person name="Georgii-Hemming P."/>
            <person name="Gingeras T.R."/>
            <person name="Gojobori T."/>
            <person name="Green R.E."/>
            <person name="Gustincich S."/>
            <person name="Harbers M."/>
            <person name="Hayashi Y."/>
            <person name="Hensch T.K."/>
            <person name="Hirokawa N."/>
            <person name="Hill D."/>
            <person name="Huminiecki L."/>
            <person name="Iacono M."/>
            <person name="Ikeo K."/>
            <person name="Iwama A."/>
            <person name="Ishikawa T."/>
            <person name="Jakt M."/>
            <person name="Kanapin A."/>
            <person name="Katoh M."/>
            <person name="Kawasawa Y."/>
            <person name="Kelso J."/>
            <person name="Kitamura H."/>
            <person name="Kitano H."/>
            <person name="Kollias G."/>
            <person name="Krishnan S.P."/>
            <person name="Kruger A."/>
            <person name="Kummerfeld S.K."/>
            <person name="Kurochkin I.V."/>
            <person name="Lareau L.F."/>
            <person name="Lazarevic D."/>
            <person name="Lipovich L."/>
            <person name="Liu J."/>
            <person name="Liuni S."/>
            <person name="McWilliam S."/>
            <person name="Madan Babu M."/>
            <person name="Madera M."/>
            <person name="Marchionni L."/>
            <person name="Matsuda H."/>
            <person name="Matsuzawa S."/>
            <person name="Miki H."/>
            <person name="Mignone F."/>
            <person name="Miyake S."/>
            <person name="Morris K."/>
            <person name="Mottagui-Tabar S."/>
            <person name="Mulder N."/>
            <person name="Nakano N."/>
            <person name="Nakauchi H."/>
            <person name="Ng P."/>
            <person name="Nilsson R."/>
            <person name="Nishiguchi S."/>
            <person name="Nishikawa S."/>
            <person name="Nori F."/>
            <person name="Ohara O."/>
            <person name="Okazaki Y."/>
            <person name="Orlando V."/>
            <person name="Pang K.C."/>
            <person name="Pavan W.J."/>
            <person name="Pavesi G."/>
            <person name="Pesole G."/>
            <person name="Petrovsky N."/>
            <person name="Piazza S."/>
            <person name="Reed J."/>
            <person name="Reid J.F."/>
            <person name="Ring B.Z."/>
            <person name="Ringwald M."/>
            <person name="Rost B."/>
            <person name="Ruan Y."/>
            <person name="Salzberg S.L."/>
            <person name="Sandelin A."/>
            <person name="Schneider C."/>
            <person name="Schoenbach C."/>
            <person name="Sekiguchi K."/>
            <person name="Semple C.A."/>
            <person name="Seno S."/>
            <person name="Sessa L."/>
            <person name="Sheng Y."/>
            <person name="Shibata Y."/>
            <person name="Shimada H."/>
            <person name="Shimada K."/>
            <person name="Silva D."/>
            <person name="Sinclair B."/>
            <person name="Sperling S."/>
            <person name="Stupka E."/>
            <person name="Sugiura K."/>
            <person name="Sultana R."/>
            <person name="Takenaka Y."/>
            <person name="Taki K."/>
            <person name="Tammoja K."/>
            <person name="Tan S.L."/>
            <person name="Tang S."/>
            <person name="Taylor M.S."/>
            <person name="Tegner J."/>
            <person name="Teichmann S.A."/>
            <person name="Ueda H.R."/>
            <person name="van Nimwegen E."/>
            <person name="Verardo R."/>
            <person name="Wei C.L."/>
            <person name="Yagi K."/>
            <person name="Yamanishi H."/>
            <person name="Zabarovsky E."/>
            <person name="Zhu S."/>
            <person name="Zimmer A."/>
            <person name="Hide W."/>
            <person name="Bult C."/>
            <person name="Grimmond S.M."/>
            <person name="Teasdale R.D."/>
            <person name="Liu E.T."/>
            <person name="Brusic V."/>
            <person name="Quackenbush J."/>
            <person name="Wahlestedt C."/>
            <person name="Mattick J.S."/>
            <person name="Hume D.A."/>
            <person name="Kai C."/>
            <person name="Sasaki D."/>
            <person name="Tomaru Y."/>
            <person name="Fukuda S."/>
            <person name="Kanamori-Katayama M."/>
            <person name="Suzuki M."/>
            <person name="Aoki J."/>
            <person name="Arakawa T."/>
            <person name="Iida J."/>
            <person name="Imamura K."/>
            <person name="Itoh M."/>
            <person name="Kato T."/>
            <person name="Kawaji H."/>
            <person name="Kawagashira N."/>
            <person name="Kawashima T."/>
            <person name="Kojima M."/>
            <person name="Kondo S."/>
            <person name="Konno H."/>
            <person name="Nakano K."/>
            <person name="Ninomiya N."/>
            <person name="Nishio T."/>
            <person name="Okada M."/>
            <person name="Plessy C."/>
            <person name="Shibata K."/>
            <person name="Shiraki T."/>
            <person name="Suzuki S."/>
            <person name="Tagami M."/>
            <person name="Waki K."/>
            <person name="Watahiki A."/>
            <person name="Okamura-Oho Y."/>
            <person name="Suzuki H."/>
            <person name="Kawai J."/>
            <person name="Hayashizaki Y."/>
        </authorList>
    </citation>
    <scope>NUCLEOTIDE SEQUENCE [LARGE SCALE MRNA]</scope>
    <source>
        <strain>C57BL/6J</strain>
        <tissue>Embryonic breast</tissue>
        <tissue>Head</tissue>
    </source>
</reference>
<proteinExistence type="evidence at transcript level"/>